<gene>
    <name type="primary">dinQ</name>
    <name type="ordered locus">UTI89_C4020</name>
</gene>
<protein>
    <recommendedName>
        <fullName>Uncharacterized protein DinQ</fullName>
    </recommendedName>
</protein>
<reference key="1">
    <citation type="journal article" date="2006" name="Proc. Natl. Acad. Sci. U.S.A.">
        <title>Identification of genes subject to positive selection in uropathogenic strains of Escherichia coli: a comparative genomics approach.</title>
        <authorList>
            <person name="Chen S.L."/>
            <person name="Hung C.-S."/>
            <person name="Xu J."/>
            <person name="Reigstad C.S."/>
            <person name="Magrini V."/>
            <person name="Sabo A."/>
            <person name="Blasiar D."/>
            <person name="Bieri T."/>
            <person name="Meyer R.R."/>
            <person name="Ozersky P."/>
            <person name="Armstrong J.R."/>
            <person name="Fulton R.S."/>
            <person name="Latreille J.P."/>
            <person name="Spieth J."/>
            <person name="Hooton T.M."/>
            <person name="Mardis E.R."/>
            <person name="Hultgren S.J."/>
            <person name="Gordon J.I."/>
        </authorList>
    </citation>
    <scope>NUCLEOTIDE SEQUENCE [LARGE SCALE GENOMIC DNA]</scope>
    <source>
        <strain>UTI89 / UPEC</strain>
    </source>
</reference>
<proteinExistence type="inferred from homology"/>
<dbReference type="EMBL" id="CP000243">
    <property type="protein sequence ID" value="ABE09449.1"/>
    <property type="status" value="ALT_INIT"/>
    <property type="molecule type" value="Genomic_DNA"/>
</dbReference>
<dbReference type="SMR" id="Q1R5B5"/>
<dbReference type="TCDB" id="1.C.120.1.1">
    <property type="family name" value="the pore-forming toxic peptide, dinq (dinq) family"/>
</dbReference>
<dbReference type="KEGG" id="eci:UTI89_C4020"/>
<dbReference type="HOGENOM" id="CLU_3250642_0_0_6"/>
<dbReference type="Proteomes" id="UP000001952">
    <property type="component" value="Chromosome"/>
</dbReference>
<dbReference type="GO" id="GO:0016020">
    <property type="term" value="C:membrane"/>
    <property type="evidence" value="ECO:0007669"/>
    <property type="project" value="UniProtKB-SubCell"/>
</dbReference>
<dbReference type="InterPro" id="IPR048189">
    <property type="entry name" value="DinQ-like"/>
</dbReference>
<dbReference type="NCBIfam" id="NF041472">
    <property type="entry name" value="toxin_DinQ"/>
    <property type="match status" value="1"/>
</dbReference>
<feature type="chain" id="PRO_0000311854" description="Uncharacterized protein DinQ">
    <location>
        <begin position="1"/>
        <end position="42"/>
    </location>
</feature>
<feature type="transmembrane region" description="Helical" evidence="1">
    <location>
        <begin position="21"/>
        <end position="41"/>
    </location>
</feature>
<keyword id="KW-0472">Membrane</keyword>
<keyword id="KW-0812">Transmembrane</keyword>
<keyword id="KW-1133">Transmembrane helix</keyword>
<organism>
    <name type="scientific">Escherichia coli (strain UTI89 / UPEC)</name>
    <dbReference type="NCBI Taxonomy" id="364106"/>
    <lineage>
        <taxon>Bacteria</taxon>
        <taxon>Pseudomonadati</taxon>
        <taxon>Pseudomonadota</taxon>
        <taxon>Gammaproteobacteria</taxon>
        <taxon>Enterobacterales</taxon>
        <taxon>Enterobacteriaceae</taxon>
        <taxon>Escherichia</taxon>
    </lineage>
</organism>
<name>DINQ_ECOUT</name>
<evidence type="ECO:0000255" key="1"/>
<evidence type="ECO:0000305" key="2"/>
<comment type="subcellular location">
    <subcellularLocation>
        <location evidence="2">Membrane</location>
        <topology evidence="2">Single-pass membrane protein</topology>
    </subcellularLocation>
</comment>
<comment type="similarity">
    <text evidence="2">Belongs to the DinQ family.</text>
</comment>
<comment type="sequence caution" evidence="2">
    <conflict type="erroneous initiation">
        <sequence resource="EMBL-CDS" id="ABE09449"/>
    </conflict>
</comment>
<sequence>MSKRMHSHSIAWRKRVIDKAIIVLGALIALLELIRFLLQLLN</sequence>
<accession>Q1R5B5</accession>